<accession>P30890</accession>
<reference key="1">
    <citation type="journal article" date="1991" name="J. Gen. Virol.">
        <title>Comparison of group B rotavirus genes 9 and 11.</title>
        <authorList>
            <person name="Petric M."/>
            <person name="Mayur K."/>
            <person name="Vonderfecht S."/>
            <person name="Eiden J.J."/>
        </authorList>
    </citation>
    <scope>NUCLEOTIDE SEQUENCE [GENOMIC RNA]</scope>
</reference>
<protein>
    <recommendedName>
        <fullName evidence="1">Non-structural protein 5</fullName>
        <shortName evidence="1">NSP5</shortName>
    </recommendedName>
    <alternativeName>
        <fullName evidence="1">NS26</fullName>
    </alternativeName>
</protein>
<name>NSP5_ROTGI</name>
<evidence type="ECO:0000255" key="1">
    <source>
        <dbReference type="HAMAP-Rule" id="MF_04092"/>
    </source>
</evidence>
<evidence type="ECO:0000256" key="2">
    <source>
        <dbReference type="SAM" id="MobiDB-lite"/>
    </source>
</evidence>
<feature type="chain" id="PRO_0000149630" description="Non-structural protein 5">
    <location>
        <begin position="1"/>
        <end position="174"/>
    </location>
</feature>
<feature type="region of interest" description="Disordered" evidence="2">
    <location>
        <begin position="18"/>
        <end position="40"/>
    </location>
</feature>
<feature type="region of interest" description="Disordered" evidence="2">
    <location>
        <begin position="86"/>
        <end position="114"/>
    </location>
</feature>
<feature type="compositionally biased region" description="Basic and acidic residues" evidence="2">
    <location>
        <begin position="23"/>
        <end position="38"/>
    </location>
</feature>
<feature type="compositionally biased region" description="Basic and acidic residues" evidence="2">
    <location>
        <begin position="98"/>
        <end position="113"/>
    </location>
</feature>
<sequence length="174" mass="20057">MAEASEFNFNLRRKSRAVTASRRVKEEVKEKQKMDDSKSQVVDVDSVSVYSHESSRSNYSDAYEKLKREPVVEESNDARYRTFEFSEDEETFKPANKMSDKSQRNSKSKHTEGLECSDTVLEKISELTLEIEKVKQMNQPITVDAAFNMTLRNVDNLTTRQKQALVNSIINSMN</sequence>
<comment type="function">
    <text evidence="1">Plays an essential role in the viral genome replication. Participates, together with NSP2, in the formation of viral factories (viroplasms) which are large inclusions in the host cytoplasm where replication intermediates are assembled and viral RNA replication takes place. Orchestrates the recruitment of viroplasmic proteins such as capsid proteins to these factories.</text>
</comment>
<comment type="subunit">
    <text evidence="1">Homodimer. Interacts with VP1. Interacts with VP2. Interacts with NSP2 and NSP6.</text>
</comment>
<comment type="subcellular location">
    <subcellularLocation>
        <location evidence="1">Host cytoplasm</location>
    </subcellularLocation>
    <text evidence="1">Found in spherical cytoplasmic structures, called virus factories, that appear early after infection and are the site of viral replication and packaging.</text>
</comment>
<comment type="PTM">
    <text evidence="1">O-glycosylated.</text>
</comment>
<comment type="similarity">
    <text evidence="1">Belongs to the rotavirus NSP5 family.</text>
</comment>
<organism>
    <name type="scientific">Rotavirus B (isolate RVB/Rat/United States/IDIR/1984/G1P[X])</name>
    <name type="common">RV-B</name>
    <name type="synonym">Rotavirus B (isolate infectious diarrhea of infant rats)</name>
    <dbReference type="NCBI Taxonomy" id="28877"/>
    <lineage>
        <taxon>Viruses</taxon>
        <taxon>Riboviria</taxon>
        <taxon>Orthornavirae</taxon>
        <taxon>Duplornaviricota</taxon>
        <taxon>Resentoviricetes</taxon>
        <taxon>Reovirales</taxon>
        <taxon>Sedoreoviridae</taxon>
        <taxon>Rotavirus</taxon>
        <taxon>Rotavirus B</taxon>
    </lineage>
</organism>
<keyword id="KW-0325">Glycoprotein</keyword>
<keyword id="KW-1035">Host cytoplasm</keyword>
<keyword id="KW-0547">Nucleotide-binding</keyword>
<keyword id="KW-0694">RNA-binding</keyword>
<proteinExistence type="inferred from homology"/>
<organismHost>
    <name type="scientific">Homo sapiens</name>
    <name type="common">Human</name>
    <dbReference type="NCBI Taxonomy" id="9606"/>
</organismHost>
<organismHost>
    <name type="scientific">Rattus norvegicus</name>
    <name type="common">Rat</name>
    <dbReference type="NCBI Taxonomy" id="10116"/>
</organismHost>
<dbReference type="EMBL" id="D00912">
    <property type="protein sequence ID" value="BAA00758.1"/>
    <property type="molecule type" value="Genomic_RNA"/>
</dbReference>
<dbReference type="PIR" id="JQ1310">
    <property type="entry name" value="JQ1310"/>
</dbReference>
<dbReference type="SMR" id="P30890"/>
<dbReference type="GO" id="GO:0030430">
    <property type="term" value="C:host cell cytoplasm"/>
    <property type="evidence" value="ECO:0007669"/>
    <property type="project" value="UniProtKB-SubCell"/>
</dbReference>
<dbReference type="GO" id="GO:0016887">
    <property type="term" value="F:ATP hydrolysis activity"/>
    <property type="evidence" value="ECO:0007669"/>
    <property type="project" value="UniProtKB-UniRule"/>
</dbReference>
<dbReference type="GO" id="GO:0000287">
    <property type="term" value="F:magnesium ion binding"/>
    <property type="evidence" value="ECO:0007669"/>
    <property type="project" value="UniProtKB-UniRule"/>
</dbReference>
<dbReference type="GO" id="GO:0000166">
    <property type="term" value="F:nucleotide binding"/>
    <property type="evidence" value="ECO:0007669"/>
    <property type="project" value="UniProtKB-UniRule"/>
</dbReference>
<dbReference type="GO" id="GO:0003723">
    <property type="term" value="F:RNA binding"/>
    <property type="evidence" value="ECO:0007669"/>
    <property type="project" value="UniProtKB-UniRule"/>
</dbReference>
<dbReference type="GO" id="GO:0019079">
    <property type="term" value="P:viral genome replication"/>
    <property type="evidence" value="ECO:0007669"/>
    <property type="project" value="UniProtKB-UniRule"/>
</dbReference>
<dbReference type="HAMAP" id="MF_04092">
    <property type="entry name" value="ROTA_NSP5"/>
    <property type="match status" value="1"/>
</dbReference>
<dbReference type="InterPro" id="IPR002512">
    <property type="entry name" value="Rotavirus_A/C_NSP5"/>
</dbReference>
<dbReference type="InterPro" id="IPR020244">
    <property type="entry name" value="Rotavirus_B_NSP5"/>
</dbReference>
<dbReference type="Pfam" id="PF17580">
    <property type="entry name" value="GBR_NSP5"/>
    <property type="match status" value="1"/>
</dbReference>